<evidence type="ECO:0000255" key="1">
    <source>
        <dbReference type="HAMAP-Rule" id="MF_00336"/>
    </source>
</evidence>
<gene>
    <name evidence="1" type="primary">bioD</name>
    <name type="ordered locus">Athe_2543</name>
</gene>
<accession>B9MP52</accession>
<feature type="chain" id="PRO_1000133199" description="ATP-dependent dethiobiotin synthetase BioD">
    <location>
        <begin position="1"/>
        <end position="243"/>
    </location>
</feature>
<feature type="active site" evidence="1">
    <location>
        <position position="37"/>
    </location>
</feature>
<feature type="binding site" evidence="1">
    <location>
        <begin position="12"/>
        <end position="17"/>
    </location>
    <ligand>
        <name>ATP</name>
        <dbReference type="ChEBI" id="CHEBI:30616"/>
    </ligand>
</feature>
<feature type="binding site" evidence="1">
    <location>
        <position position="16"/>
    </location>
    <ligand>
        <name>Mg(2+)</name>
        <dbReference type="ChEBI" id="CHEBI:18420"/>
    </ligand>
</feature>
<feature type="binding site" evidence="1">
    <location>
        <position position="41"/>
    </location>
    <ligand>
        <name>substrate</name>
    </ligand>
</feature>
<feature type="binding site" evidence="1">
    <location>
        <position position="54"/>
    </location>
    <ligand>
        <name>ATP</name>
        <dbReference type="ChEBI" id="CHEBI:30616"/>
    </ligand>
</feature>
<feature type="binding site" evidence="1">
    <location>
        <position position="54"/>
    </location>
    <ligand>
        <name>Mg(2+)</name>
        <dbReference type="ChEBI" id="CHEBI:18420"/>
    </ligand>
</feature>
<feature type="binding site" evidence="1">
    <location>
        <begin position="115"/>
        <end position="118"/>
    </location>
    <ligand>
        <name>ATP</name>
        <dbReference type="ChEBI" id="CHEBI:30616"/>
    </ligand>
</feature>
<feature type="binding site" evidence="1">
    <location>
        <position position="115"/>
    </location>
    <ligand>
        <name>Mg(2+)</name>
        <dbReference type="ChEBI" id="CHEBI:18420"/>
    </ligand>
</feature>
<feature type="binding site" evidence="1">
    <location>
        <begin position="179"/>
        <end position="180"/>
    </location>
    <ligand>
        <name>ATP</name>
        <dbReference type="ChEBI" id="CHEBI:30616"/>
    </ligand>
</feature>
<name>BIOD_CALBD</name>
<proteinExistence type="inferred from homology"/>
<organism>
    <name type="scientific">Caldicellulosiruptor bescii (strain ATCC BAA-1888 / DSM 6725 / KCTC 15123 / Z-1320)</name>
    <name type="common">Anaerocellum thermophilum</name>
    <dbReference type="NCBI Taxonomy" id="521460"/>
    <lineage>
        <taxon>Bacteria</taxon>
        <taxon>Bacillati</taxon>
        <taxon>Bacillota</taxon>
        <taxon>Bacillota incertae sedis</taxon>
        <taxon>Caldicellulosiruptorales</taxon>
        <taxon>Caldicellulosiruptoraceae</taxon>
        <taxon>Caldicellulosiruptor</taxon>
    </lineage>
</organism>
<reference key="1">
    <citation type="submission" date="2009-01" db="EMBL/GenBank/DDBJ databases">
        <title>Complete sequence of chromosome of Caldicellulosiruptor becscii DSM 6725.</title>
        <authorList>
            <person name="Lucas S."/>
            <person name="Copeland A."/>
            <person name="Lapidus A."/>
            <person name="Glavina del Rio T."/>
            <person name="Tice H."/>
            <person name="Bruce D."/>
            <person name="Goodwin L."/>
            <person name="Pitluck S."/>
            <person name="Sims D."/>
            <person name="Meincke L."/>
            <person name="Brettin T."/>
            <person name="Detter J.C."/>
            <person name="Han C."/>
            <person name="Larimer F."/>
            <person name="Land M."/>
            <person name="Hauser L."/>
            <person name="Kyrpides N."/>
            <person name="Ovchinnikova G."/>
            <person name="Kataeva I."/>
            <person name="Adams M.W.W."/>
        </authorList>
    </citation>
    <scope>NUCLEOTIDE SEQUENCE [LARGE SCALE GENOMIC DNA]</scope>
    <source>
        <strain>ATCC BAA-1888 / DSM 6725 / KCTC 15123 / Z-1320</strain>
    </source>
</reference>
<keyword id="KW-0067">ATP-binding</keyword>
<keyword id="KW-0093">Biotin biosynthesis</keyword>
<keyword id="KW-0963">Cytoplasm</keyword>
<keyword id="KW-0436">Ligase</keyword>
<keyword id="KW-0460">Magnesium</keyword>
<keyword id="KW-0479">Metal-binding</keyword>
<keyword id="KW-0547">Nucleotide-binding</keyword>
<sequence length="243" mass="27536">MKAAYIVGTDTDVGKTFICAGLCWALKEKGYNIGYFKPVLSGAKRRGKMLIPQDTEFVVNFAKIEGDIYRLTPFIFEKPASPHIAASDENIDINVYQIKQTFEDLSQNYEFVVIEGCGGLAVPLKEEKNQFYMQYQLIKEICNNVILVTTTKLGTINHTLLTVEFAKAYGLCLKGIIVNMYKNEPDEDKVINTIAKFTNIPILAKVDFINDFPSDVDENKFKNVFKKCFDDRAIMKIMGVFEC</sequence>
<comment type="function">
    <text evidence="1">Catalyzes a mechanistically unusual reaction, the ATP-dependent insertion of CO2 between the N7 and N8 nitrogen atoms of 7,8-diaminopelargonic acid (DAPA, also called 7,8-diammoniononanoate) to form a ureido ring.</text>
</comment>
<comment type="catalytic activity">
    <reaction evidence="1">
        <text>(7R,8S)-7,8-diammoniononanoate + CO2 + ATP = (4R,5S)-dethiobiotin + ADP + phosphate + 3 H(+)</text>
        <dbReference type="Rhea" id="RHEA:15805"/>
        <dbReference type="ChEBI" id="CHEBI:15378"/>
        <dbReference type="ChEBI" id="CHEBI:16526"/>
        <dbReference type="ChEBI" id="CHEBI:30616"/>
        <dbReference type="ChEBI" id="CHEBI:43474"/>
        <dbReference type="ChEBI" id="CHEBI:149469"/>
        <dbReference type="ChEBI" id="CHEBI:149473"/>
        <dbReference type="ChEBI" id="CHEBI:456216"/>
        <dbReference type="EC" id="6.3.3.3"/>
    </reaction>
</comment>
<comment type="cofactor">
    <cofactor evidence="1">
        <name>Mg(2+)</name>
        <dbReference type="ChEBI" id="CHEBI:18420"/>
    </cofactor>
</comment>
<comment type="pathway">
    <text evidence="1">Cofactor biosynthesis; biotin biosynthesis; biotin from 7,8-diaminononanoate: step 1/2.</text>
</comment>
<comment type="subunit">
    <text evidence="1">Homodimer.</text>
</comment>
<comment type="subcellular location">
    <subcellularLocation>
        <location evidence="1">Cytoplasm</location>
    </subcellularLocation>
</comment>
<comment type="similarity">
    <text evidence="1">Belongs to the dethiobiotin synthetase family.</text>
</comment>
<dbReference type="EC" id="6.3.3.3" evidence="1"/>
<dbReference type="EMBL" id="CP001393">
    <property type="protein sequence ID" value="ACM61611.1"/>
    <property type="molecule type" value="Genomic_DNA"/>
</dbReference>
<dbReference type="RefSeq" id="WP_015908861.1">
    <property type="nucleotide sequence ID" value="NC_012034.1"/>
</dbReference>
<dbReference type="SMR" id="B9MP52"/>
<dbReference type="STRING" id="521460.Athe_2543"/>
<dbReference type="GeneID" id="31773898"/>
<dbReference type="KEGG" id="ate:Athe_2543"/>
<dbReference type="eggNOG" id="COG0132">
    <property type="taxonomic scope" value="Bacteria"/>
</dbReference>
<dbReference type="HOGENOM" id="CLU_072551_3_0_9"/>
<dbReference type="UniPathway" id="UPA00078">
    <property type="reaction ID" value="UER00161"/>
</dbReference>
<dbReference type="Proteomes" id="UP000007723">
    <property type="component" value="Chromosome"/>
</dbReference>
<dbReference type="GO" id="GO:0005829">
    <property type="term" value="C:cytosol"/>
    <property type="evidence" value="ECO:0007669"/>
    <property type="project" value="TreeGrafter"/>
</dbReference>
<dbReference type="GO" id="GO:0005524">
    <property type="term" value="F:ATP binding"/>
    <property type="evidence" value="ECO:0007669"/>
    <property type="project" value="UniProtKB-UniRule"/>
</dbReference>
<dbReference type="GO" id="GO:0004141">
    <property type="term" value="F:dethiobiotin synthase activity"/>
    <property type="evidence" value="ECO:0007669"/>
    <property type="project" value="UniProtKB-UniRule"/>
</dbReference>
<dbReference type="GO" id="GO:0000287">
    <property type="term" value="F:magnesium ion binding"/>
    <property type="evidence" value="ECO:0007669"/>
    <property type="project" value="UniProtKB-UniRule"/>
</dbReference>
<dbReference type="GO" id="GO:0009102">
    <property type="term" value="P:biotin biosynthetic process"/>
    <property type="evidence" value="ECO:0007669"/>
    <property type="project" value="UniProtKB-UniRule"/>
</dbReference>
<dbReference type="CDD" id="cd03109">
    <property type="entry name" value="DTBS"/>
    <property type="match status" value="1"/>
</dbReference>
<dbReference type="Gene3D" id="3.40.50.300">
    <property type="entry name" value="P-loop containing nucleotide triphosphate hydrolases"/>
    <property type="match status" value="1"/>
</dbReference>
<dbReference type="HAMAP" id="MF_00336">
    <property type="entry name" value="BioD"/>
    <property type="match status" value="1"/>
</dbReference>
<dbReference type="InterPro" id="IPR004472">
    <property type="entry name" value="DTB_synth_BioD"/>
</dbReference>
<dbReference type="InterPro" id="IPR027417">
    <property type="entry name" value="P-loop_NTPase"/>
</dbReference>
<dbReference type="NCBIfam" id="TIGR00347">
    <property type="entry name" value="bioD"/>
    <property type="match status" value="1"/>
</dbReference>
<dbReference type="PANTHER" id="PTHR43210">
    <property type="entry name" value="DETHIOBIOTIN SYNTHETASE"/>
    <property type="match status" value="1"/>
</dbReference>
<dbReference type="PANTHER" id="PTHR43210:SF5">
    <property type="entry name" value="DETHIOBIOTIN SYNTHETASE"/>
    <property type="match status" value="1"/>
</dbReference>
<dbReference type="Pfam" id="PF13500">
    <property type="entry name" value="AAA_26"/>
    <property type="match status" value="1"/>
</dbReference>
<dbReference type="PIRSF" id="PIRSF006755">
    <property type="entry name" value="DTB_synth"/>
    <property type="match status" value="1"/>
</dbReference>
<dbReference type="SUPFAM" id="SSF52540">
    <property type="entry name" value="P-loop containing nucleoside triphosphate hydrolases"/>
    <property type="match status" value="1"/>
</dbReference>
<protein>
    <recommendedName>
        <fullName evidence="1">ATP-dependent dethiobiotin synthetase BioD</fullName>
        <ecNumber evidence="1">6.3.3.3</ecNumber>
    </recommendedName>
    <alternativeName>
        <fullName evidence="1">DTB synthetase</fullName>
        <shortName evidence="1">DTBS</shortName>
    </alternativeName>
    <alternativeName>
        <fullName evidence="1">Dethiobiotin synthase</fullName>
    </alternativeName>
</protein>